<evidence type="ECO:0000255" key="1">
    <source>
        <dbReference type="HAMAP-Rule" id="MF_00005"/>
    </source>
</evidence>
<name>ASSY_LEGPA</name>
<organism>
    <name type="scientific">Legionella pneumophila (strain Paris)</name>
    <dbReference type="NCBI Taxonomy" id="297246"/>
    <lineage>
        <taxon>Bacteria</taxon>
        <taxon>Pseudomonadati</taxon>
        <taxon>Pseudomonadota</taxon>
        <taxon>Gammaproteobacteria</taxon>
        <taxon>Legionellales</taxon>
        <taxon>Legionellaceae</taxon>
        <taxon>Legionella</taxon>
    </lineage>
</organism>
<feature type="chain" id="PRO_0000148603" description="Argininosuccinate synthase">
    <location>
        <begin position="1"/>
        <end position="405"/>
    </location>
</feature>
<feature type="binding site" evidence="1">
    <location>
        <begin position="11"/>
        <end position="19"/>
    </location>
    <ligand>
        <name>ATP</name>
        <dbReference type="ChEBI" id="CHEBI:30616"/>
    </ligand>
</feature>
<feature type="binding site" evidence="1">
    <location>
        <position position="90"/>
    </location>
    <ligand>
        <name>L-citrulline</name>
        <dbReference type="ChEBI" id="CHEBI:57743"/>
    </ligand>
</feature>
<feature type="binding site" evidence="1">
    <location>
        <position position="119"/>
    </location>
    <ligand>
        <name>ATP</name>
        <dbReference type="ChEBI" id="CHEBI:30616"/>
    </ligand>
</feature>
<feature type="binding site" evidence="1">
    <location>
        <position position="121"/>
    </location>
    <ligand>
        <name>L-aspartate</name>
        <dbReference type="ChEBI" id="CHEBI:29991"/>
    </ligand>
</feature>
<feature type="binding site" evidence="1">
    <location>
        <position position="125"/>
    </location>
    <ligand>
        <name>L-aspartate</name>
        <dbReference type="ChEBI" id="CHEBI:29991"/>
    </ligand>
</feature>
<feature type="binding site" evidence="1">
    <location>
        <position position="125"/>
    </location>
    <ligand>
        <name>L-citrulline</name>
        <dbReference type="ChEBI" id="CHEBI:57743"/>
    </ligand>
</feature>
<feature type="binding site" evidence="1">
    <location>
        <position position="126"/>
    </location>
    <ligand>
        <name>L-aspartate</name>
        <dbReference type="ChEBI" id="CHEBI:29991"/>
    </ligand>
</feature>
<feature type="binding site" evidence="1">
    <location>
        <position position="129"/>
    </location>
    <ligand>
        <name>L-citrulline</name>
        <dbReference type="ChEBI" id="CHEBI:57743"/>
    </ligand>
</feature>
<feature type="binding site" evidence="1">
    <location>
        <position position="178"/>
    </location>
    <ligand>
        <name>L-citrulline</name>
        <dbReference type="ChEBI" id="CHEBI:57743"/>
    </ligand>
</feature>
<feature type="binding site" evidence="1">
    <location>
        <position position="187"/>
    </location>
    <ligand>
        <name>L-citrulline</name>
        <dbReference type="ChEBI" id="CHEBI:57743"/>
    </ligand>
</feature>
<feature type="binding site" evidence="1">
    <location>
        <position position="263"/>
    </location>
    <ligand>
        <name>L-citrulline</name>
        <dbReference type="ChEBI" id="CHEBI:57743"/>
    </ligand>
</feature>
<feature type="binding site" evidence="1">
    <location>
        <position position="275"/>
    </location>
    <ligand>
        <name>L-citrulline</name>
        <dbReference type="ChEBI" id="CHEBI:57743"/>
    </ligand>
</feature>
<dbReference type="EC" id="6.3.4.5" evidence="1"/>
<dbReference type="EMBL" id="CR628336">
    <property type="protein sequence ID" value="CAH11704.1"/>
    <property type="molecule type" value="Genomic_DNA"/>
</dbReference>
<dbReference type="RefSeq" id="WP_011213123.1">
    <property type="nucleotide sequence ID" value="NC_006368.1"/>
</dbReference>
<dbReference type="SMR" id="Q5X7P9"/>
<dbReference type="KEGG" id="lpp:lpp0556"/>
<dbReference type="LegioList" id="lpp0556"/>
<dbReference type="HOGENOM" id="CLU_032784_4_2_6"/>
<dbReference type="UniPathway" id="UPA00068">
    <property type="reaction ID" value="UER00113"/>
</dbReference>
<dbReference type="GO" id="GO:0005737">
    <property type="term" value="C:cytoplasm"/>
    <property type="evidence" value="ECO:0007669"/>
    <property type="project" value="UniProtKB-SubCell"/>
</dbReference>
<dbReference type="GO" id="GO:0004055">
    <property type="term" value="F:argininosuccinate synthase activity"/>
    <property type="evidence" value="ECO:0007669"/>
    <property type="project" value="UniProtKB-UniRule"/>
</dbReference>
<dbReference type="GO" id="GO:0005524">
    <property type="term" value="F:ATP binding"/>
    <property type="evidence" value="ECO:0007669"/>
    <property type="project" value="UniProtKB-UniRule"/>
</dbReference>
<dbReference type="GO" id="GO:0000053">
    <property type="term" value="P:argininosuccinate metabolic process"/>
    <property type="evidence" value="ECO:0007669"/>
    <property type="project" value="TreeGrafter"/>
</dbReference>
<dbReference type="GO" id="GO:0006526">
    <property type="term" value="P:L-arginine biosynthetic process"/>
    <property type="evidence" value="ECO:0007669"/>
    <property type="project" value="UniProtKB-UniRule"/>
</dbReference>
<dbReference type="GO" id="GO:0000050">
    <property type="term" value="P:urea cycle"/>
    <property type="evidence" value="ECO:0007669"/>
    <property type="project" value="TreeGrafter"/>
</dbReference>
<dbReference type="CDD" id="cd01999">
    <property type="entry name" value="ASS"/>
    <property type="match status" value="1"/>
</dbReference>
<dbReference type="FunFam" id="3.40.50.620:FF:000019">
    <property type="entry name" value="Argininosuccinate synthase"/>
    <property type="match status" value="1"/>
</dbReference>
<dbReference type="FunFam" id="3.90.1260.10:FF:000007">
    <property type="entry name" value="Argininosuccinate synthase"/>
    <property type="match status" value="1"/>
</dbReference>
<dbReference type="Gene3D" id="3.90.1260.10">
    <property type="entry name" value="Argininosuccinate synthetase, chain A, domain 2"/>
    <property type="match status" value="1"/>
</dbReference>
<dbReference type="Gene3D" id="3.40.50.620">
    <property type="entry name" value="HUPs"/>
    <property type="match status" value="1"/>
</dbReference>
<dbReference type="Gene3D" id="1.20.5.470">
    <property type="entry name" value="Single helix bin"/>
    <property type="match status" value="1"/>
</dbReference>
<dbReference type="HAMAP" id="MF_00005">
    <property type="entry name" value="Arg_succ_synth_type1"/>
    <property type="match status" value="1"/>
</dbReference>
<dbReference type="InterPro" id="IPR048268">
    <property type="entry name" value="Arginosuc_syn_C"/>
</dbReference>
<dbReference type="InterPro" id="IPR048267">
    <property type="entry name" value="Arginosuc_syn_N"/>
</dbReference>
<dbReference type="InterPro" id="IPR001518">
    <property type="entry name" value="Arginosuc_synth"/>
</dbReference>
<dbReference type="InterPro" id="IPR018223">
    <property type="entry name" value="Arginosuc_synth_CS"/>
</dbReference>
<dbReference type="InterPro" id="IPR023434">
    <property type="entry name" value="Arginosuc_synth_type_1_subfam"/>
</dbReference>
<dbReference type="InterPro" id="IPR024074">
    <property type="entry name" value="AS_cat/multimer_dom_body"/>
</dbReference>
<dbReference type="InterPro" id="IPR014729">
    <property type="entry name" value="Rossmann-like_a/b/a_fold"/>
</dbReference>
<dbReference type="NCBIfam" id="TIGR00032">
    <property type="entry name" value="argG"/>
    <property type="match status" value="1"/>
</dbReference>
<dbReference type="NCBIfam" id="NF001770">
    <property type="entry name" value="PRK00509.1"/>
    <property type="match status" value="1"/>
</dbReference>
<dbReference type="PANTHER" id="PTHR11587">
    <property type="entry name" value="ARGININOSUCCINATE SYNTHASE"/>
    <property type="match status" value="1"/>
</dbReference>
<dbReference type="PANTHER" id="PTHR11587:SF2">
    <property type="entry name" value="ARGININOSUCCINATE SYNTHASE"/>
    <property type="match status" value="1"/>
</dbReference>
<dbReference type="Pfam" id="PF20979">
    <property type="entry name" value="Arginosuc_syn_C"/>
    <property type="match status" value="1"/>
</dbReference>
<dbReference type="Pfam" id="PF00764">
    <property type="entry name" value="Arginosuc_synth"/>
    <property type="match status" value="1"/>
</dbReference>
<dbReference type="SUPFAM" id="SSF52402">
    <property type="entry name" value="Adenine nucleotide alpha hydrolases-like"/>
    <property type="match status" value="1"/>
</dbReference>
<dbReference type="SUPFAM" id="SSF69864">
    <property type="entry name" value="Argininosuccinate synthetase, C-terminal domain"/>
    <property type="match status" value="1"/>
</dbReference>
<dbReference type="PROSITE" id="PS00564">
    <property type="entry name" value="ARGININOSUCCIN_SYN_1"/>
    <property type="match status" value="1"/>
</dbReference>
<dbReference type="PROSITE" id="PS00565">
    <property type="entry name" value="ARGININOSUCCIN_SYN_2"/>
    <property type="match status" value="1"/>
</dbReference>
<accession>Q5X7P9</accession>
<reference key="1">
    <citation type="journal article" date="2004" name="Nat. Genet.">
        <title>Evidence in the Legionella pneumophila genome for exploitation of host cell functions and high genome plasticity.</title>
        <authorList>
            <person name="Cazalet C."/>
            <person name="Rusniok C."/>
            <person name="Brueggemann H."/>
            <person name="Zidane N."/>
            <person name="Magnier A."/>
            <person name="Ma L."/>
            <person name="Tichit M."/>
            <person name="Jarraud S."/>
            <person name="Bouchier C."/>
            <person name="Vandenesch F."/>
            <person name="Kunst F."/>
            <person name="Etienne J."/>
            <person name="Glaser P."/>
            <person name="Buchrieser C."/>
        </authorList>
    </citation>
    <scope>NUCLEOTIDE SEQUENCE [LARGE SCALE GENOMIC DNA]</scope>
    <source>
        <strain>Paris</strain>
    </source>
</reference>
<comment type="catalytic activity">
    <reaction evidence="1">
        <text>L-citrulline + L-aspartate + ATP = 2-(N(omega)-L-arginino)succinate + AMP + diphosphate + H(+)</text>
        <dbReference type="Rhea" id="RHEA:10932"/>
        <dbReference type="ChEBI" id="CHEBI:15378"/>
        <dbReference type="ChEBI" id="CHEBI:29991"/>
        <dbReference type="ChEBI" id="CHEBI:30616"/>
        <dbReference type="ChEBI" id="CHEBI:33019"/>
        <dbReference type="ChEBI" id="CHEBI:57472"/>
        <dbReference type="ChEBI" id="CHEBI:57743"/>
        <dbReference type="ChEBI" id="CHEBI:456215"/>
        <dbReference type="EC" id="6.3.4.5"/>
    </reaction>
</comment>
<comment type="pathway">
    <text evidence="1">Amino-acid biosynthesis; L-arginine biosynthesis; L-arginine from L-ornithine and carbamoyl phosphate: step 2/3.</text>
</comment>
<comment type="subunit">
    <text evidence="1">Homotetramer.</text>
</comment>
<comment type="subcellular location">
    <subcellularLocation>
        <location evidence="1">Cytoplasm</location>
    </subcellularLocation>
</comment>
<comment type="similarity">
    <text evidence="1">Belongs to the argininosuccinate synthase family. Type 1 subfamily.</text>
</comment>
<sequence length="405" mass="45000">MKKVIKKIALAYSGGLDTSIMIPWLKEHYEHAEVIAVICDLGQQEDLDAIKNKALKSGASKAYVVDVKNEFAIQYLWPLVKSGALYEDQYILGTISRPLIAQKLVEIALTEEVNAVAHGATGKGNDQVRFEYSIKALAPQLEIIAPWRTWDIKSRQEAIVYAKAHGIEVPVTPKAPYSRDHNIWYISHEGGVLEDPSQEMPDDVLLMTAPVSQTPDEEEVVVLDFKKGVPVALNGQELSPVDLLNSLNQKAGQHGIGVADIVENRLVGMKIRGIYEAPAAAVLYKAHKLLESLCLTRSTLHLKQSLQQTYANLVYEGRWFSQTKQALDAFIDVTQQHVTGCVKLKLFKGNIIPAGMHSPYSLHHPELATFEEDNVYNQKDAEGFINLFSLSAKIYSQVHQGGNYD</sequence>
<protein>
    <recommendedName>
        <fullName evidence="1">Argininosuccinate synthase</fullName>
        <ecNumber evidence="1">6.3.4.5</ecNumber>
    </recommendedName>
    <alternativeName>
        <fullName evidence="1">Citrulline--aspartate ligase</fullName>
    </alternativeName>
</protein>
<gene>
    <name evidence="1" type="primary">argG</name>
    <name type="ordered locus">lpp0556</name>
</gene>
<proteinExistence type="inferred from homology"/>
<keyword id="KW-0028">Amino-acid biosynthesis</keyword>
<keyword id="KW-0055">Arginine biosynthesis</keyword>
<keyword id="KW-0067">ATP-binding</keyword>
<keyword id="KW-0963">Cytoplasm</keyword>
<keyword id="KW-0436">Ligase</keyword>
<keyword id="KW-0547">Nucleotide-binding</keyword>